<feature type="chain" id="PRO_1000118458" description="Probable cytosol aminopeptidase">
    <location>
        <begin position="1"/>
        <end position="477"/>
    </location>
</feature>
<feature type="active site" evidence="1">
    <location>
        <position position="257"/>
    </location>
</feature>
<feature type="active site" evidence="1">
    <location>
        <position position="331"/>
    </location>
</feature>
<feature type="binding site" evidence="1">
    <location>
        <position position="245"/>
    </location>
    <ligand>
        <name>Mn(2+)</name>
        <dbReference type="ChEBI" id="CHEBI:29035"/>
        <label>2</label>
    </ligand>
</feature>
<feature type="binding site" evidence="1">
    <location>
        <position position="250"/>
    </location>
    <ligand>
        <name>Mn(2+)</name>
        <dbReference type="ChEBI" id="CHEBI:29035"/>
        <label>1</label>
    </ligand>
</feature>
<feature type="binding site" evidence="1">
    <location>
        <position position="250"/>
    </location>
    <ligand>
        <name>Mn(2+)</name>
        <dbReference type="ChEBI" id="CHEBI:29035"/>
        <label>2</label>
    </ligand>
</feature>
<feature type="binding site" evidence="1">
    <location>
        <position position="268"/>
    </location>
    <ligand>
        <name>Mn(2+)</name>
        <dbReference type="ChEBI" id="CHEBI:29035"/>
        <label>2</label>
    </ligand>
</feature>
<feature type="binding site" evidence="1">
    <location>
        <position position="327"/>
    </location>
    <ligand>
        <name>Mn(2+)</name>
        <dbReference type="ChEBI" id="CHEBI:29035"/>
        <label>1</label>
    </ligand>
</feature>
<feature type="binding site" evidence="1">
    <location>
        <position position="329"/>
    </location>
    <ligand>
        <name>Mn(2+)</name>
        <dbReference type="ChEBI" id="CHEBI:29035"/>
        <label>1</label>
    </ligand>
</feature>
<feature type="binding site" evidence="1">
    <location>
        <position position="329"/>
    </location>
    <ligand>
        <name>Mn(2+)</name>
        <dbReference type="ChEBI" id="CHEBI:29035"/>
        <label>2</label>
    </ligand>
</feature>
<reference key="1">
    <citation type="submission" date="2008-04" db="EMBL/GenBank/DDBJ databases">
        <title>Complete sequence of chromosome of Exiguobacterium sibiricum 255-15.</title>
        <authorList>
            <consortium name="US DOE Joint Genome Institute"/>
            <person name="Copeland A."/>
            <person name="Lucas S."/>
            <person name="Lapidus A."/>
            <person name="Glavina del Rio T."/>
            <person name="Dalin E."/>
            <person name="Tice H."/>
            <person name="Bruce D."/>
            <person name="Goodwin L."/>
            <person name="Pitluck S."/>
            <person name="Kiss H."/>
            <person name="Chertkov O."/>
            <person name="Monk C."/>
            <person name="Brettin T."/>
            <person name="Detter J.C."/>
            <person name="Han C."/>
            <person name="Kuske C.R."/>
            <person name="Schmutz J."/>
            <person name="Larimer F."/>
            <person name="Land M."/>
            <person name="Hauser L."/>
            <person name="Kyrpides N."/>
            <person name="Mikhailova N."/>
            <person name="Vishnivetskaya T."/>
            <person name="Rodrigues D.F."/>
            <person name="Gilichinsky D."/>
            <person name="Tiedje J."/>
            <person name="Richardson P."/>
        </authorList>
    </citation>
    <scope>NUCLEOTIDE SEQUENCE [LARGE SCALE GENOMIC DNA]</scope>
    <source>
        <strain>DSM 17290 / CCUG 55495 / CIP 109462 / JCM 13490 / 255-15</strain>
    </source>
</reference>
<gene>
    <name evidence="1" type="primary">pepA</name>
    <name type="ordered locus">Exig_2305</name>
</gene>
<protein>
    <recommendedName>
        <fullName evidence="1">Probable cytosol aminopeptidase</fullName>
        <ecNumber evidence="1">3.4.11.1</ecNumber>
    </recommendedName>
    <alternativeName>
        <fullName evidence="1">Leucine aminopeptidase</fullName>
        <shortName evidence="1">LAP</shortName>
        <ecNumber evidence="1">3.4.11.10</ecNumber>
    </alternativeName>
    <alternativeName>
        <fullName evidence="1">Leucyl aminopeptidase</fullName>
    </alternativeName>
</protein>
<sequence>MRWNQVDPQAHVEVLVVGISGNQPVEERIRSLYPDRLDEWVRRGDISTKQGELRLLPTLTGTVERVLFVGLGKAEGLTTDGLRRLFGKAAQFLKARQLSKVTIDATTFPDQPVELIAETFGLSTYEVKHYKTNTRATYDLDVTIWSDAGEQAVERGAALAQATNLARRLVTMPGNLLTAPALADEARFIAERHGHELKILEKADMEALGMGALLAVNQGSTIPPKLIVLEYKGAGDDAPIAVVGKGVTFDTGGYSIKPKDGIVGMKGDMGGAAAVLGLFEALGHLKPNVNVLGVIPATDNMISGDAFKPDDVITSMAGKTIEILNTDAEGRLVLADAVTYAKEYKPKMIIDLATLTGGVLVALGTEITGALTNDAGLYERFEAVTKETNEMVWQMPYVDQFIKQVRRSDVADLNNSPGRMGHMIFGGAFVGEFVGDTPWLHLDIAGTSEQKAATELGPKGATGVMVRSLYHFVEREK</sequence>
<dbReference type="EC" id="3.4.11.1" evidence="1"/>
<dbReference type="EC" id="3.4.11.10" evidence="1"/>
<dbReference type="EMBL" id="CP001022">
    <property type="protein sequence ID" value="ACB61756.1"/>
    <property type="molecule type" value="Genomic_DNA"/>
</dbReference>
<dbReference type="RefSeq" id="WP_012371173.1">
    <property type="nucleotide sequence ID" value="NC_010556.1"/>
</dbReference>
<dbReference type="SMR" id="B1YKV4"/>
<dbReference type="STRING" id="262543.Exig_2305"/>
<dbReference type="MEROPS" id="M17.010"/>
<dbReference type="KEGG" id="esi:Exig_2305"/>
<dbReference type="eggNOG" id="COG0260">
    <property type="taxonomic scope" value="Bacteria"/>
</dbReference>
<dbReference type="HOGENOM" id="CLU_013734_2_2_9"/>
<dbReference type="OrthoDB" id="9809354at2"/>
<dbReference type="Proteomes" id="UP000001681">
    <property type="component" value="Chromosome"/>
</dbReference>
<dbReference type="GO" id="GO:0005737">
    <property type="term" value="C:cytoplasm"/>
    <property type="evidence" value="ECO:0007669"/>
    <property type="project" value="UniProtKB-SubCell"/>
</dbReference>
<dbReference type="GO" id="GO:0030145">
    <property type="term" value="F:manganese ion binding"/>
    <property type="evidence" value="ECO:0007669"/>
    <property type="project" value="UniProtKB-UniRule"/>
</dbReference>
<dbReference type="GO" id="GO:0070006">
    <property type="term" value="F:metalloaminopeptidase activity"/>
    <property type="evidence" value="ECO:0007669"/>
    <property type="project" value="InterPro"/>
</dbReference>
<dbReference type="GO" id="GO:0006508">
    <property type="term" value="P:proteolysis"/>
    <property type="evidence" value="ECO:0007669"/>
    <property type="project" value="UniProtKB-KW"/>
</dbReference>
<dbReference type="CDD" id="cd00433">
    <property type="entry name" value="Peptidase_M17"/>
    <property type="match status" value="1"/>
</dbReference>
<dbReference type="Gene3D" id="3.40.220.10">
    <property type="entry name" value="Leucine Aminopeptidase, subunit E, domain 1"/>
    <property type="match status" value="1"/>
</dbReference>
<dbReference type="Gene3D" id="3.40.630.10">
    <property type="entry name" value="Zn peptidases"/>
    <property type="match status" value="1"/>
</dbReference>
<dbReference type="HAMAP" id="MF_00181">
    <property type="entry name" value="Cytosol_peptidase_M17"/>
    <property type="match status" value="1"/>
</dbReference>
<dbReference type="InterPro" id="IPR011356">
    <property type="entry name" value="Leucine_aapep/pepB"/>
</dbReference>
<dbReference type="InterPro" id="IPR043472">
    <property type="entry name" value="Macro_dom-like"/>
</dbReference>
<dbReference type="InterPro" id="IPR000819">
    <property type="entry name" value="Peptidase_M17_C"/>
</dbReference>
<dbReference type="InterPro" id="IPR023042">
    <property type="entry name" value="Peptidase_M17_leu_NH2_pept"/>
</dbReference>
<dbReference type="InterPro" id="IPR008283">
    <property type="entry name" value="Peptidase_M17_N"/>
</dbReference>
<dbReference type="NCBIfam" id="NF002073">
    <property type="entry name" value="PRK00913.1-2"/>
    <property type="match status" value="1"/>
</dbReference>
<dbReference type="NCBIfam" id="NF002083">
    <property type="entry name" value="PRK00913.3-5"/>
    <property type="match status" value="1"/>
</dbReference>
<dbReference type="PANTHER" id="PTHR11963:SF23">
    <property type="entry name" value="CYTOSOL AMINOPEPTIDASE"/>
    <property type="match status" value="1"/>
</dbReference>
<dbReference type="PANTHER" id="PTHR11963">
    <property type="entry name" value="LEUCINE AMINOPEPTIDASE-RELATED"/>
    <property type="match status" value="1"/>
</dbReference>
<dbReference type="Pfam" id="PF00883">
    <property type="entry name" value="Peptidase_M17"/>
    <property type="match status" value="1"/>
</dbReference>
<dbReference type="Pfam" id="PF02789">
    <property type="entry name" value="Peptidase_M17_N"/>
    <property type="match status" value="1"/>
</dbReference>
<dbReference type="PRINTS" id="PR00481">
    <property type="entry name" value="LAMNOPPTDASE"/>
</dbReference>
<dbReference type="SUPFAM" id="SSF52949">
    <property type="entry name" value="Macro domain-like"/>
    <property type="match status" value="1"/>
</dbReference>
<dbReference type="SUPFAM" id="SSF53187">
    <property type="entry name" value="Zn-dependent exopeptidases"/>
    <property type="match status" value="1"/>
</dbReference>
<dbReference type="PROSITE" id="PS00631">
    <property type="entry name" value="CYTOSOL_AP"/>
    <property type="match status" value="1"/>
</dbReference>
<accession>B1YKV4</accession>
<proteinExistence type="inferred from homology"/>
<keyword id="KW-0031">Aminopeptidase</keyword>
<keyword id="KW-0963">Cytoplasm</keyword>
<keyword id="KW-0378">Hydrolase</keyword>
<keyword id="KW-0464">Manganese</keyword>
<keyword id="KW-0479">Metal-binding</keyword>
<keyword id="KW-0645">Protease</keyword>
<keyword id="KW-1185">Reference proteome</keyword>
<comment type="function">
    <text evidence="1">Presumably involved in the processing and regular turnover of intracellular proteins. Catalyzes the removal of unsubstituted N-terminal amino acids from various peptides.</text>
</comment>
<comment type="catalytic activity">
    <reaction evidence="1">
        <text>Release of an N-terminal amino acid, Xaa-|-Yaa-, in which Xaa is preferably Leu, but may be other amino acids including Pro although not Arg or Lys, and Yaa may be Pro. Amino acid amides and methyl esters are also readily hydrolyzed, but rates on arylamides are exceedingly low.</text>
        <dbReference type="EC" id="3.4.11.1"/>
    </reaction>
</comment>
<comment type="catalytic activity">
    <reaction evidence="1">
        <text>Release of an N-terminal amino acid, preferentially leucine, but not glutamic or aspartic acids.</text>
        <dbReference type="EC" id="3.4.11.10"/>
    </reaction>
</comment>
<comment type="cofactor">
    <cofactor evidence="1">
        <name>Mn(2+)</name>
        <dbReference type="ChEBI" id="CHEBI:29035"/>
    </cofactor>
    <text evidence="1">Binds 2 manganese ions per subunit.</text>
</comment>
<comment type="subcellular location">
    <subcellularLocation>
        <location evidence="1">Cytoplasm</location>
    </subcellularLocation>
</comment>
<comment type="similarity">
    <text evidence="1">Belongs to the peptidase M17 family.</text>
</comment>
<name>AMPA_EXIS2</name>
<organism>
    <name type="scientific">Exiguobacterium sibiricum (strain DSM 17290 / CCUG 55495 / CIP 109462 / JCM 13490 / 255-15)</name>
    <dbReference type="NCBI Taxonomy" id="262543"/>
    <lineage>
        <taxon>Bacteria</taxon>
        <taxon>Bacillati</taxon>
        <taxon>Bacillota</taxon>
        <taxon>Bacilli</taxon>
        <taxon>Bacillales</taxon>
        <taxon>Bacillales Family XII. Incertae Sedis</taxon>
        <taxon>Exiguobacterium</taxon>
    </lineage>
</organism>
<evidence type="ECO:0000255" key="1">
    <source>
        <dbReference type="HAMAP-Rule" id="MF_00181"/>
    </source>
</evidence>